<organism>
    <name type="scientific">Paraburkholderia xenovorans (strain LB400)</name>
    <dbReference type="NCBI Taxonomy" id="266265"/>
    <lineage>
        <taxon>Bacteria</taxon>
        <taxon>Pseudomonadati</taxon>
        <taxon>Pseudomonadota</taxon>
        <taxon>Betaproteobacteria</taxon>
        <taxon>Burkholderiales</taxon>
        <taxon>Burkholderiaceae</taxon>
        <taxon>Paraburkholderia</taxon>
    </lineage>
</organism>
<keyword id="KW-0028">Amino-acid biosynthesis</keyword>
<keyword id="KW-0067">ATP-binding</keyword>
<keyword id="KW-0418">Kinase</keyword>
<keyword id="KW-0547">Nucleotide-binding</keyword>
<keyword id="KW-1185">Reference proteome</keyword>
<keyword id="KW-0791">Threonine biosynthesis</keyword>
<keyword id="KW-0808">Transferase</keyword>
<name>KHSE_PARXL</name>
<comment type="catalytic activity">
    <reaction evidence="1">
        <text>L-homoserine + ATP = O-phospho-L-homoserine + ADP + H(+)</text>
        <dbReference type="Rhea" id="RHEA:13985"/>
        <dbReference type="ChEBI" id="CHEBI:15378"/>
        <dbReference type="ChEBI" id="CHEBI:30616"/>
        <dbReference type="ChEBI" id="CHEBI:57476"/>
        <dbReference type="ChEBI" id="CHEBI:57590"/>
        <dbReference type="ChEBI" id="CHEBI:456216"/>
        <dbReference type="EC" id="2.7.1.39"/>
    </reaction>
</comment>
<comment type="pathway">
    <text evidence="1">Amino-acid biosynthesis; L-threonine biosynthesis; L-threonine from L-aspartate: step 4/5.</text>
</comment>
<comment type="similarity">
    <text evidence="1">Belongs to the pseudomonas-type ThrB family.</text>
</comment>
<proteinExistence type="inferred from homology"/>
<dbReference type="EC" id="2.7.1.39" evidence="1"/>
<dbReference type="EMBL" id="CP000271">
    <property type="protein sequence ID" value="ABE33155.1"/>
    <property type="molecule type" value="Genomic_DNA"/>
</dbReference>
<dbReference type="RefSeq" id="WP_011490533.1">
    <property type="nucleotide sequence ID" value="NC_007952.1"/>
</dbReference>
<dbReference type="SMR" id="Q13RY4"/>
<dbReference type="STRING" id="266265.Bxe_B2840"/>
<dbReference type="KEGG" id="bxb:DR64_5169"/>
<dbReference type="KEGG" id="bxe:Bxe_B2840"/>
<dbReference type="PATRIC" id="fig|266265.5.peg.4853"/>
<dbReference type="eggNOG" id="COG2334">
    <property type="taxonomic scope" value="Bacteria"/>
</dbReference>
<dbReference type="OrthoDB" id="9777460at2"/>
<dbReference type="UniPathway" id="UPA00050">
    <property type="reaction ID" value="UER00064"/>
</dbReference>
<dbReference type="Proteomes" id="UP000001817">
    <property type="component" value="Chromosome 2"/>
</dbReference>
<dbReference type="GO" id="GO:0005524">
    <property type="term" value="F:ATP binding"/>
    <property type="evidence" value="ECO:0007669"/>
    <property type="project" value="UniProtKB-KW"/>
</dbReference>
<dbReference type="GO" id="GO:0004413">
    <property type="term" value="F:homoserine kinase activity"/>
    <property type="evidence" value="ECO:0007669"/>
    <property type="project" value="UniProtKB-UniRule"/>
</dbReference>
<dbReference type="GO" id="GO:0009088">
    <property type="term" value="P:threonine biosynthetic process"/>
    <property type="evidence" value="ECO:0007669"/>
    <property type="project" value="UniProtKB-UniRule"/>
</dbReference>
<dbReference type="CDD" id="cd05153">
    <property type="entry name" value="HomoserineK_II"/>
    <property type="match status" value="1"/>
</dbReference>
<dbReference type="Gene3D" id="3.90.1200.10">
    <property type="match status" value="1"/>
</dbReference>
<dbReference type="Gene3D" id="3.30.200.20">
    <property type="entry name" value="Phosphorylase Kinase, domain 1"/>
    <property type="match status" value="1"/>
</dbReference>
<dbReference type="HAMAP" id="MF_00301">
    <property type="entry name" value="Homoser_kinase_2"/>
    <property type="match status" value="1"/>
</dbReference>
<dbReference type="InterPro" id="IPR002575">
    <property type="entry name" value="Aminoglycoside_PTrfase"/>
</dbReference>
<dbReference type="InterPro" id="IPR005280">
    <property type="entry name" value="Homoserine_kinase_II"/>
</dbReference>
<dbReference type="InterPro" id="IPR011009">
    <property type="entry name" value="Kinase-like_dom_sf"/>
</dbReference>
<dbReference type="InterPro" id="IPR050249">
    <property type="entry name" value="Pseudomonas-type_ThrB"/>
</dbReference>
<dbReference type="NCBIfam" id="NF003558">
    <property type="entry name" value="PRK05231.1"/>
    <property type="match status" value="1"/>
</dbReference>
<dbReference type="NCBIfam" id="TIGR00938">
    <property type="entry name" value="thrB_alt"/>
    <property type="match status" value="1"/>
</dbReference>
<dbReference type="PANTHER" id="PTHR21064:SF6">
    <property type="entry name" value="AMINOGLYCOSIDE PHOSPHOTRANSFERASE DOMAIN-CONTAINING PROTEIN"/>
    <property type="match status" value="1"/>
</dbReference>
<dbReference type="PANTHER" id="PTHR21064">
    <property type="entry name" value="AMINOGLYCOSIDE PHOSPHOTRANSFERASE DOMAIN-CONTAINING PROTEIN-RELATED"/>
    <property type="match status" value="1"/>
</dbReference>
<dbReference type="Pfam" id="PF01636">
    <property type="entry name" value="APH"/>
    <property type="match status" value="1"/>
</dbReference>
<dbReference type="SUPFAM" id="SSF56112">
    <property type="entry name" value="Protein kinase-like (PK-like)"/>
    <property type="match status" value="1"/>
</dbReference>
<protein>
    <recommendedName>
        <fullName evidence="1">Homoserine kinase</fullName>
        <shortName evidence="1">HK</shortName>
        <shortName evidence="1">HSK</shortName>
        <ecNumber evidence="1">2.7.1.39</ecNumber>
    </recommendedName>
</protein>
<sequence>MAVFTAVTEPQLAEWMRHYDLGDVVEFRGISSGIENSNFFLTTTRGEYVLTIFEKLTAEQLPFYLDLMRHLAAHRVPVPDPMPREDGALFGLLQGKPAAIVTRLEGAPELAPGVEHCIEVGQMLARMHLAGRDYPAYQPNLRSLPWWKETVPTILPFLEGGQRELLSSELAYQEAFFASADYAALPEGPCHADLFRDNAMFAHAEPGTGHEVRLGGFFDFYFAGCDKWLFDVAVTVNDWCVDLATGKLDAARTEAMLRAYQTVRPFTAEENRHWGDMLRAGAYRFWVSRLYDFHLPRAAELLKPHDPGHFERILRERLSGVALPGIHTSCN</sequence>
<evidence type="ECO:0000255" key="1">
    <source>
        <dbReference type="HAMAP-Rule" id="MF_00301"/>
    </source>
</evidence>
<gene>
    <name evidence="1" type="primary">thrB</name>
    <name type="ordered locus">Bxeno_B0187</name>
    <name type="ORF">Bxe_B2840</name>
</gene>
<feature type="chain" id="PRO_0000300791" description="Homoserine kinase">
    <location>
        <begin position="1"/>
        <end position="331"/>
    </location>
</feature>
<reference key="1">
    <citation type="journal article" date="2006" name="Proc. Natl. Acad. Sci. U.S.A.">
        <title>Burkholderia xenovorans LB400 harbors a multi-replicon, 9.73-Mbp genome shaped for versatility.</title>
        <authorList>
            <person name="Chain P.S.G."/>
            <person name="Denef V.J."/>
            <person name="Konstantinidis K.T."/>
            <person name="Vergez L.M."/>
            <person name="Agullo L."/>
            <person name="Reyes V.L."/>
            <person name="Hauser L."/>
            <person name="Cordova M."/>
            <person name="Gomez L."/>
            <person name="Gonzalez M."/>
            <person name="Land M."/>
            <person name="Lao V."/>
            <person name="Larimer F."/>
            <person name="LiPuma J.J."/>
            <person name="Mahenthiralingam E."/>
            <person name="Malfatti S.A."/>
            <person name="Marx C.J."/>
            <person name="Parnell J.J."/>
            <person name="Ramette A."/>
            <person name="Richardson P."/>
            <person name="Seeger M."/>
            <person name="Smith D."/>
            <person name="Spilker T."/>
            <person name="Sul W.J."/>
            <person name="Tsoi T.V."/>
            <person name="Ulrich L.E."/>
            <person name="Zhulin I.B."/>
            <person name="Tiedje J.M."/>
        </authorList>
    </citation>
    <scope>NUCLEOTIDE SEQUENCE [LARGE SCALE GENOMIC DNA]</scope>
    <source>
        <strain>LB400</strain>
    </source>
</reference>
<accession>Q13RY4</accession>